<evidence type="ECO:0000250" key="1"/>
<evidence type="ECO:0000255" key="2"/>
<evidence type="ECO:0000256" key="3">
    <source>
        <dbReference type="SAM" id="MobiDB-lite"/>
    </source>
</evidence>
<evidence type="ECO:0000305" key="4"/>
<feature type="chain" id="PRO_0000379800" description="Transmembrane protein 184 homolog DDB_G0284525">
    <location>
        <begin position="1"/>
        <end position="493"/>
    </location>
</feature>
<feature type="transmembrane region" description="Helical" evidence="2">
    <location>
        <begin position="46"/>
        <end position="66"/>
    </location>
</feature>
<feature type="transmembrane region" description="Helical" evidence="2">
    <location>
        <begin position="87"/>
        <end position="107"/>
    </location>
</feature>
<feature type="transmembrane region" description="Helical" evidence="2">
    <location>
        <begin position="119"/>
        <end position="139"/>
    </location>
</feature>
<feature type="transmembrane region" description="Helical" evidence="2">
    <location>
        <begin position="180"/>
        <end position="200"/>
    </location>
</feature>
<feature type="transmembrane region" description="Helical" evidence="2">
    <location>
        <begin position="212"/>
        <end position="232"/>
    </location>
</feature>
<feature type="transmembrane region" description="Helical" evidence="2">
    <location>
        <begin position="254"/>
        <end position="274"/>
    </location>
</feature>
<feature type="transmembrane region" description="Helical" evidence="2">
    <location>
        <begin position="293"/>
        <end position="313"/>
    </location>
</feature>
<feature type="region of interest" description="Disordered" evidence="3">
    <location>
        <begin position="1"/>
        <end position="25"/>
    </location>
</feature>
<feature type="compositionally biased region" description="Polar residues" evidence="3">
    <location>
        <begin position="1"/>
        <end position="10"/>
    </location>
</feature>
<feature type="glycosylation site" description="N-linked (GlcNAc...) asparagine" evidence="2">
    <location>
        <position position="415"/>
    </location>
</feature>
<feature type="glycosylation site" description="N-linked (GlcNAc...) asparagine" evidence="2">
    <location>
        <position position="416"/>
    </location>
</feature>
<reference key="1">
    <citation type="journal article" date="2005" name="Nature">
        <title>The genome of the social amoeba Dictyostelium discoideum.</title>
        <authorList>
            <person name="Eichinger L."/>
            <person name="Pachebat J.A."/>
            <person name="Gloeckner G."/>
            <person name="Rajandream M.A."/>
            <person name="Sucgang R."/>
            <person name="Berriman M."/>
            <person name="Song J."/>
            <person name="Olsen R."/>
            <person name="Szafranski K."/>
            <person name="Xu Q."/>
            <person name="Tunggal B."/>
            <person name="Kummerfeld S."/>
            <person name="Madera M."/>
            <person name="Konfortov B.A."/>
            <person name="Rivero F."/>
            <person name="Bankier A.T."/>
            <person name="Lehmann R."/>
            <person name="Hamlin N."/>
            <person name="Davies R."/>
            <person name="Gaudet P."/>
            <person name="Fey P."/>
            <person name="Pilcher K."/>
            <person name="Chen G."/>
            <person name="Saunders D."/>
            <person name="Sodergren E.J."/>
            <person name="Davis P."/>
            <person name="Kerhornou A."/>
            <person name="Nie X."/>
            <person name="Hall N."/>
            <person name="Anjard C."/>
            <person name="Hemphill L."/>
            <person name="Bason N."/>
            <person name="Farbrother P."/>
            <person name="Desany B."/>
            <person name="Just E."/>
            <person name="Morio T."/>
            <person name="Rost R."/>
            <person name="Churcher C.M."/>
            <person name="Cooper J."/>
            <person name="Haydock S."/>
            <person name="van Driessche N."/>
            <person name="Cronin A."/>
            <person name="Goodhead I."/>
            <person name="Muzny D.M."/>
            <person name="Mourier T."/>
            <person name="Pain A."/>
            <person name="Lu M."/>
            <person name="Harper D."/>
            <person name="Lindsay R."/>
            <person name="Hauser H."/>
            <person name="James K.D."/>
            <person name="Quiles M."/>
            <person name="Madan Babu M."/>
            <person name="Saito T."/>
            <person name="Buchrieser C."/>
            <person name="Wardroper A."/>
            <person name="Felder M."/>
            <person name="Thangavelu M."/>
            <person name="Johnson D."/>
            <person name="Knights A."/>
            <person name="Loulseged H."/>
            <person name="Mungall K.L."/>
            <person name="Oliver K."/>
            <person name="Price C."/>
            <person name="Quail M.A."/>
            <person name="Urushihara H."/>
            <person name="Hernandez J."/>
            <person name="Rabbinowitsch E."/>
            <person name="Steffen D."/>
            <person name="Sanders M."/>
            <person name="Ma J."/>
            <person name="Kohara Y."/>
            <person name="Sharp S."/>
            <person name="Simmonds M.N."/>
            <person name="Spiegler S."/>
            <person name="Tivey A."/>
            <person name="Sugano S."/>
            <person name="White B."/>
            <person name="Walker D."/>
            <person name="Woodward J.R."/>
            <person name="Winckler T."/>
            <person name="Tanaka Y."/>
            <person name="Shaulsky G."/>
            <person name="Schleicher M."/>
            <person name="Weinstock G.M."/>
            <person name="Rosenthal A."/>
            <person name="Cox E.C."/>
            <person name="Chisholm R.L."/>
            <person name="Gibbs R.A."/>
            <person name="Loomis W.F."/>
            <person name="Platzer M."/>
            <person name="Kay R.R."/>
            <person name="Williams J.G."/>
            <person name="Dear P.H."/>
            <person name="Noegel A.A."/>
            <person name="Barrell B.G."/>
            <person name="Kuspa A."/>
        </authorList>
    </citation>
    <scope>NUCLEOTIDE SEQUENCE [LARGE SCALE GENOMIC DNA]</scope>
    <source>
        <strain>AX4</strain>
    </source>
</reference>
<accession>Q54PI4</accession>
<comment type="function">
    <text evidence="1">Probable transporter.</text>
</comment>
<comment type="subcellular location">
    <subcellularLocation>
        <location evidence="1">Cell membrane</location>
        <topology evidence="1">Multi-pass membrane protein</topology>
    </subcellularLocation>
</comment>
<comment type="similarity">
    <text evidence="4">Belongs to the TMEM184 family.</text>
</comment>
<comment type="caution">
    <text evidence="4">Despite its name, this protein may not be the one-to-one ortholog of TMEM184A.</text>
</comment>
<name>T1841_DICDI</name>
<organism>
    <name type="scientific">Dictyostelium discoideum</name>
    <name type="common">Social amoeba</name>
    <dbReference type="NCBI Taxonomy" id="44689"/>
    <lineage>
        <taxon>Eukaryota</taxon>
        <taxon>Amoebozoa</taxon>
        <taxon>Evosea</taxon>
        <taxon>Eumycetozoa</taxon>
        <taxon>Dictyostelia</taxon>
        <taxon>Dictyosteliales</taxon>
        <taxon>Dictyosteliaceae</taxon>
        <taxon>Dictyostelium</taxon>
    </lineage>
</organism>
<gene>
    <name type="primary">tmem184A</name>
    <name type="ORF">DDB_G0284525</name>
</gene>
<proteinExistence type="inferred from homology"/>
<dbReference type="EMBL" id="AAFI02000066">
    <property type="protein sequence ID" value="EAL65189.1"/>
    <property type="molecule type" value="Genomic_DNA"/>
</dbReference>
<dbReference type="RefSeq" id="XP_638548.1">
    <property type="nucleotide sequence ID" value="XM_633456.1"/>
</dbReference>
<dbReference type="FunCoup" id="Q54PI4">
    <property type="interactions" value="54"/>
</dbReference>
<dbReference type="STRING" id="44689.Q54PI4"/>
<dbReference type="GlyCosmos" id="Q54PI4">
    <property type="glycosylation" value="2 sites, No reported glycans"/>
</dbReference>
<dbReference type="GlyGen" id="Q54PI4">
    <property type="glycosylation" value="2 sites"/>
</dbReference>
<dbReference type="PaxDb" id="44689-DDB0304965"/>
<dbReference type="EnsemblProtists" id="EAL65189">
    <property type="protein sequence ID" value="EAL65189"/>
    <property type="gene ID" value="DDB_G0284525"/>
</dbReference>
<dbReference type="GeneID" id="8624641"/>
<dbReference type="KEGG" id="ddi:DDB_G0284525"/>
<dbReference type="dictyBase" id="DDB_G0284525">
    <property type="gene designation" value="tmem184A"/>
</dbReference>
<dbReference type="VEuPathDB" id="AmoebaDB:DDB_G0284525"/>
<dbReference type="eggNOG" id="KOG2641">
    <property type="taxonomic scope" value="Eukaryota"/>
</dbReference>
<dbReference type="HOGENOM" id="CLU_549122_0_0_1"/>
<dbReference type="InParanoid" id="Q54PI4"/>
<dbReference type="OMA" id="TNFGWIP"/>
<dbReference type="PhylomeDB" id="Q54PI4"/>
<dbReference type="PRO" id="PR:Q54PI4"/>
<dbReference type="Proteomes" id="UP000002195">
    <property type="component" value="Chromosome 4"/>
</dbReference>
<dbReference type="GO" id="GO:0016020">
    <property type="term" value="C:membrane"/>
    <property type="evidence" value="ECO:0000318"/>
    <property type="project" value="GO_Central"/>
</dbReference>
<dbReference type="GO" id="GO:0005886">
    <property type="term" value="C:plasma membrane"/>
    <property type="evidence" value="ECO:0007669"/>
    <property type="project" value="UniProtKB-SubCell"/>
</dbReference>
<dbReference type="GO" id="GO:0022857">
    <property type="term" value="F:transmembrane transporter activity"/>
    <property type="evidence" value="ECO:0000318"/>
    <property type="project" value="GO_Central"/>
</dbReference>
<dbReference type="InterPro" id="IPR005178">
    <property type="entry name" value="Ostalpha/TMEM184C"/>
</dbReference>
<dbReference type="PANTHER" id="PTHR23423">
    <property type="entry name" value="ORGANIC SOLUTE TRANSPORTER-RELATED"/>
    <property type="match status" value="1"/>
</dbReference>
<dbReference type="Pfam" id="PF03619">
    <property type="entry name" value="Solute_trans_a"/>
    <property type="match status" value="1"/>
</dbReference>
<dbReference type="SMART" id="SM01417">
    <property type="entry name" value="Solute_trans_a"/>
    <property type="match status" value="1"/>
</dbReference>
<protein>
    <recommendedName>
        <fullName>Transmembrane protein 184 homolog DDB_G0284525</fullName>
    </recommendedName>
</protein>
<sequence>MTQESSSSNHYVDESSFDNNNNNNNNGGEGSSNEILIRIPFLHDSVPALYAMFALASLFVLLATILSAHLIYKHLKYYTQPDHQRYIVRIVFMIPIYAIYSLLSLLLHNYQVYFALLRDCYEAYVLYMFFALCVSYGGGDKNLVTHFTSHPVMRLPMPLFFKFKPNEAFLQVCRMGMLQYVLVRPAVTLASAIFEIFGLYDEGSYAINRFYFYNAFIINVSVTVALYIVVLFYQAAAEELAPYKPLLKFTSIKIVVFFCFWQSIAISGMTNFGWIPTLDGWNSGEVSTGLQNFLICFEMFGVAILHQYAFPYELYRVRAFSAAPLIHRVEMGTVFKSVINSVSQKDMVKETVKSFKGTKITDGKTGLYSGLKDEVFNEFDIEEIEMGDFTSANDNNNFDDFDFSENNINSNNKDNNSSIYNDGASKKNHIGSAILAGGGGGGKKDNDLITDDDFFSLMNNDYANIDFSNFDQDALEEMNFDDDDDDMAFTARR</sequence>
<keyword id="KW-1003">Cell membrane</keyword>
<keyword id="KW-0325">Glycoprotein</keyword>
<keyword id="KW-0472">Membrane</keyword>
<keyword id="KW-1185">Reference proteome</keyword>
<keyword id="KW-0812">Transmembrane</keyword>
<keyword id="KW-1133">Transmembrane helix</keyword>
<keyword id="KW-0813">Transport</keyword>